<sequence length="227" mass="25093">MMTSFFDQFASPYLLGIPLILVAMLLPWLLFPAPTSRWINNRLITVQTWLTGRFTNQLMTPLNFSGHKWALLFASLMVFLITINLLGLLPYTFTPTTQLSLNMGFAVPLWLATVIIGMKNQPTIALGHLLPEGTPIPLIPALIIIETISLFIRPLALGVRLTANLTAGHLLIQLIATAVFVLLPMMPAVAILTASVLFLLTLLEVAVAMIQAYVFILLLSLYLQENI</sequence>
<name>ATP6_DANRE</name>
<keyword id="KW-0066">ATP synthesis</keyword>
<keyword id="KW-0138">CF(0)</keyword>
<keyword id="KW-0375">Hydrogen ion transport</keyword>
<keyword id="KW-0406">Ion transport</keyword>
<keyword id="KW-0472">Membrane</keyword>
<keyword id="KW-0496">Mitochondrion</keyword>
<keyword id="KW-0999">Mitochondrion inner membrane</keyword>
<keyword id="KW-1185">Reference proteome</keyword>
<keyword id="KW-0812">Transmembrane</keyword>
<keyword id="KW-1133">Transmembrane helix</keyword>
<keyword id="KW-0813">Transport</keyword>
<comment type="function">
    <text evidence="1">Subunit a, of the mitochondrial membrane ATP synthase complex (F(1)F(0) ATP synthase or Complex V) that produces ATP from ADP in the presence of a proton gradient across the membrane which is generated by electron transport complexes of the respiratory chain. ATP synthase complex consist of a soluble F(1) head domain - the catalytic core - and a membrane F(1) domain - the membrane proton channel. These two domains are linked by a central stalk rotating inside the F(1) region and a stationary peripheral stalk. During catalysis, ATP synthesis in the catalytic domain of F(1) is coupled via a rotary mechanism of the central stalk subunits to proton translocation. With the subunit c (ATP5MC1), forms the proton-conducting channel in the F(0) domain, that contains two crucial half-channels (inlet and outlet) that facilitate proton movement from the mitochondrial intermembrane space (IMS) into the matrix. Protons are taken up via the inlet half-channel and released through the outlet half-channel, following a Grotthuss mechanism.</text>
</comment>
<comment type="catalytic activity">
    <reaction evidence="1">
        <text>H(+)(in) = H(+)(out)</text>
        <dbReference type="Rhea" id="RHEA:34979"/>
        <dbReference type="ChEBI" id="CHEBI:15378"/>
    </reaction>
</comment>
<comment type="subunit">
    <text evidence="1">Component of the ATP synthase complex composed at least of ATP5F1A/subunit alpha, ATP5F1B/subunit beta, ATP5MC1/subunit c (homooctomer), MT-ATP6/subunit a, MT-ATP8/subunit 8, ATP5ME/subunit e, ATP5MF/subunit f, ATP5MG/subunit g, ATP5MK/subunit k, ATP5MJ/subunit j, ATP5F1C/subunit gamma, ATP5F1D/subunit delta, ATP5F1E/subunit epsilon, ATP5PF/subunit F6, ATP5PB/subunit b, ATP5PD/subunit d, ATP5PO/subunit OSCP. ATP synthase complex consists of a soluble F(1) head domain (subunits alpha(3) and beta(3)) - the catalytic core - and a membrane F(0) domain - the membrane proton channel (subunits c, a, 8, e, f, g, k and j). These two domains are linked by a central stalk (subunits gamma, delta, and epsilon) rotating inside the F1 region and a stationary peripheral stalk (subunits F6, b, d, and OSCP). Interacts with DNAJC30; interaction is direct.</text>
</comment>
<comment type="subcellular location">
    <subcellularLocation>
        <location>Mitochondrion inner membrane</location>
        <topology>Multi-pass membrane protein</topology>
    </subcellularLocation>
</comment>
<comment type="similarity">
    <text evidence="3">Belongs to the ATPase A chain family.</text>
</comment>
<organism>
    <name type="scientific">Danio rerio</name>
    <name type="common">Zebrafish</name>
    <name type="synonym">Brachydanio rerio</name>
    <dbReference type="NCBI Taxonomy" id="7955"/>
    <lineage>
        <taxon>Eukaryota</taxon>
        <taxon>Metazoa</taxon>
        <taxon>Chordata</taxon>
        <taxon>Craniata</taxon>
        <taxon>Vertebrata</taxon>
        <taxon>Euteleostomi</taxon>
        <taxon>Actinopterygii</taxon>
        <taxon>Neopterygii</taxon>
        <taxon>Teleostei</taxon>
        <taxon>Ostariophysi</taxon>
        <taxon>Cypriniformes</taxon>
        <taxon>Danionidae</taxon>
        <taxon>Danioninae</taxon>
        <taxon>Danio</taxon>
    </lineage>
</organism>
<dbReference type="EMBL" id="AC024175">
    <property type="protein sequence ID" value="AAF74302.1"/>
    <property type="molecule type" value="Genomic_DNA"/>
</dbReference>
<dbReference type="RefSeq" id="NP_059336.1">
    <property type="nucleotide sequence ID" value="NC_002333.2"/>
</dbReference>
<dbReference type="SMR" id="Q9MIY5"/>
<dbReference type="FunCoup" id="Q9MIY5">
    <property type="interactions" value="20"/>
</dbReference>
<dbReference type="STRING" id="7955.ENSDARP00000087874"/>
<dbReference type="PaxDb" id="7955-ENSDARP00000087874"/>
<dbReference type="Ensembl" id="ENSDART00000093612">
    <property type="protein sequence ID" value="ENSDARP00000087874"/>
    <property type="gene ID" value="ENSDARG00000063911"/>
</dbReference>
<dbReference type="GeneID" id="140519"/>
<dbReference type="KEGG" id="dre:140519"/>
<dbReference type="AGR" id="ZFIN:ZDB-GENE-011205-18"/>
<dbReference type="CTD" id="4508"/>
<dbReference type="eggNOG" id="KOG4665">
    <property type="taxonomic scope" value="Eukaryota"/>
</dbReference>
<dbReference type="HOGENOM" id="CLU_041018_0_2_1"/>
<dbReference type="InParanoid" id="Q9MIY5"/>
<dbReference type="OMA" id="FFDQFMS"/>
<dbReference type="OrthoDB" id="5976622at2759"/>
<dbReference type="PhylomeDB" id="Q9MIY5"/>
<dbReference type="TreeFam" id="TF343395"/>
<dbReference type="Reactome" id="R-DRE-163210">
    <property type="pathway name" value="Formation of ATP by chemiosmotic coupling"/>
</dbReference>
<dbReference type="Reactome" id="R-DRE-8949613">
    <property type="pathway name" value="Cristae formation"/>
</dbReference>
<dbReference type="Reactome" id="R-DRE-9837999">
    <property type="pathway name" value="Mitochondrial protein degradation"/>
</dbReference>
<dbReference type="PRO" id="PR:Q9MIY5"/>
<dbReference type="Proteomes" id="UP000000437">
    <property type="component" value="Mitochondrion MT"/>
</dbReference>
<dbReference type="Bgee" id="ENSDARG00000063911">
    <property type="expression patterns" value="Expressed in early embryo and 22 other cell types or tissues"/>
</dbReference>
<dbReference type="ExpressionAtlas" id="Q9MIY5">
    <property type="expression patterns" value="baseline"/>
</dbReference>
<dbReference type="GO" id="GO:0005743">
    <property type="term" value="C:mitochondrial inner membrane"/>
    <property type="evidence" value="ECO:0007669"/>
    <property type="project" value="UniProtKB-SubCell"/>
</dbReference>
<dbReference type="GO" id="GO:0045259">
    <property type="term" value="C:proton-transporting ATP synthase complex"/>
    <property type="evidence" value="ECO:0000250"/>
    <property type="project" value="UniProtKB"/>
</dbReference>
<dbReference type="GO" id="GO:0015252">
    <property type="term" value="F:proton channel activity"/>
    <property type="evidence" value="ECO:0000250"/>
    <property type="project" value="UniProtKB"/>
</dbReference>
<dbReference type="GO" id="GO:0015986">
    <property type="term" value="P:proton motive force-driven ATP synthesis"/>
    <property type="evidence" value="ECO:0000250"/>
    <property type="project" value="UniProtKB"/>
</dbReference>
<dbReference type="GO" id="GO:1902600">
    <property type="term" value="P:proton transmembrane transport"/>
    <property type="evidence" value="ECO:0000250"/>
    <property type="project" value="UniProtKB"/>
</dbReference>
<dbReference type="CDD" id="cd00310">
    <property type="entry name" value="ATP-synt_Fo_a_6"/>
    <property type="match status" value="1"/>
</dbReference>
<dbReference type="FunFam" id="1.20.120.220:FF:000004">
    <property type="entry name" value="ATP synthase subunit a"/>
    <property type="match status" value="1"/>
</dbReference>
<dbReference type="Gene3D" id="1.20.120.220">
    <property type="entry name" value="ATP synthase, F0 complex, subunit A"/>
    <property type="match status" value="1"/>
</dbReference>
<dbReference type="InterPro" id="IPR000568">
    <property type="entry name" value="ATP_synth_F0_asu"/>
</dbReference>
<dbReference type="InterPro" id="IPR023011">
    <property type="entry name" value="ATP_synth_F0_asu_AS"/>
</dbReference>
<dbReference type="InterPro" id="IPR045083">
    <property type="entry name" value="ATP_synth_F0_asu_bact/mt"/>
</dbReference>
<dbReference type="InterPro" id="IPR035908">
    <property type="entry name" value="F0_ATP_A_sf"/>
</dbReference>
<dbReference type="NCBIfam" id="TIGR01131">
    <property type="entry name" value="ATP_synt_6_or_A"/>
    <property type="match status" value="1"/>
</dbReference>
<dbReference type="PANTHER" id="PTHR11410">
    <property type="entry name" value="ATP SYNTHASE SUBUNIT A"/>
    <property type="match status" value="1"/>
</dbReference>
<dbReference type="PANTHER" id="PTHR11410:SF0">
    <property type="entry name" value="ATP SYNTHASE SUBUNIT A"/>
    <property type="match status" value="1"/>
</dbReference>
<dbReference type="Pfam" id="PF00119">
    <property type="entry name" value="ATP-synt_A"/>
    <property type="match status" value="1"/>
</dbReference>
<dbReference type="PRINTS" id="PR00123">
    <property type="entry name" value="ATPASEA"/>
</dbReference>
<dbReference type="SUPFAM" id="SSF81336">
    <property type="entry name" value="F1F0 ATP synthase subunit A"/>
    <property type="match status" value="1"/>
</dbReference>
<dbReference type="PROSITE" id="PS00449">
    <property type="entry name" value="ATPASE_A"/>
    <property type="match status" value="1"/>
</dbReference>
<evidence type="ECO:0000250" key="1">
    <source>
        <dbReference type="UniProtKB" id="P00846"/>
    </source>
</evidence>
<evidence type="ECO:0000255" key="2"/>
<evidence type="ECO:0000305" key="3"/>
<evidence type="ECO:0000312" key="4">
    <source>
        <dbReference type="Proteomes" id="UP000000437"/>
    </source>
</evidence>
<gene>
    <name evidence="1" type="primary">mt-atp6</name>
    <name type="synonym">atp6</name>
    <name type="synonym">atpase6</name>
    <name type="synonym">mtatp6</name>
</gene>
<protein>
    <recommendedName>
        <fullName evidence="1">ATP synthase F(0) complex subunit a</fullName>
    </recommendedName>
    <alternativeName>
        <fullName>F-ATPase protein 6</fullName>
    </alternativeName>
    <alternativeName>
        <fullName evidence="1">Proton-conducting channel, ATP synthase F(0) complex subunit a</fullName>
    </alternativeName>
</protein>
<feature type="chain" id="PRO_0000082099" description="ATP synthase F(0) complex subunit a">
    <location>
        <begin position="1"/>
        <end position="227"/>
    </location>
</feature>
<feature type="transmembrane region" description="Helical" evidence="2">
    <location>
        <begin position="13"/>
        <end position="33"/>
    </location>
</feature>
<feature type="transmembrane region" description="Helical" evidence="2">
    <location>
        <begin position="69"/>
        <end position="89"/>
    </location>
</feature>
<feature type="transmembrane region" description="Helical" evidence="2">
    <location>
        <begin position="98"/>
        <end position="118"/>
    </location>
</feature>
<feature type="transmembrane region" description="Helical" evidence="2">
    <location>
        <begin position="132"/>
        <end position="152"/>
    </location>
</feature>
<feature type="transmembrane region" description="Helical" evidence="2">
    <location>
        <begin position="179"/>
        <end position="199"/>
    </location>
</feature>
<feature type="transmembrane region" description="Helical" evidence="2">
    <location>
        <begin position="202"/>
        <end position="222"/>
    </location>
</feature>
<accession>Q9MIY5</accession>
<reference key="1">
    <citation type="journal article" date="2001" name="Genome Res.">
        <title>The complete sequence of the zebrafish (Danio rerio) mitochondrial genome and evolutionary patterns in vertebrate mitochondrial DNA.</title>
        <authorList>
            <person name="Broughton R.E."/>
            <person name="Milam J.E."/>
            <person name="Roe B.A."/>
        </authorList>
    </citation>
    <scope>NUCLEOTIDE SEQUENCE [LARGE SCALE GENOMIC DNA]</scope>
    <source>
        <strain evidence="4">Tuebingen</strain>
    </source>
</reference>
<proteinExistence type="inferred from homology"/>
<geneLocation type="mitochondrion"/>